<reference key="1">
    <citation type="journal article" date="2004" name="J. Mol. Microbiol. Biotechnol.">
        <title>The complete genome sequence of Bacillus licheniformis DSM13, an organism with great industrial potential.</title>
        <authorList>
            <person name="Veith B."/>
            <person name="Herzberg C."/>
            <person name="Steckel S."/>
            <person name="Feesche J."/>
            <person name="Maurer K.H."/>
            <person name="Ehrenreich P."/>
            <person name="Baeumer S."/>
            <person name="Henne A."/>
            <person name="Liesegang H."/>
            <person name="Merkl R."/>
            <person name="Ehrenreich A."/>
            <person name="Gottschalk G."/>
        </authorList>
    </citation>
    <scope>NUCLEOTIDE SEQUENCE [LARGE SCALE GENOMIC DNA]</scope>
    <source>
        <strain>ATCC 14580 / DSM 13 / JCM 2505 / CCUG 7422 / NBRC 12200 / NCIMB 9375 / NCTC 10341 / NRRL NRS-1264 / Gibson 46</strain>
    </source>
</reference>
<reference key="2">
    <citation type="journal article" date="2004" name="Genome Biol.">
        <title>Complete genome sequence of the industrial bacterium Bacillus licheniformis and comparisons with closely related Bacillus species.</title>
        <authorList>
            <person name="Rey M.W."/>
            <person name="Ramaiya P."/>
            <person name="Nelson B.A."/>
            <person name="Brody-Karpin S.D."/>
            <person name="Zaretsky E.J."/>
            <person name="Tang M."/>
            <person name="Lopez de Leon A."/>
            <person name="Xiang H."/>
            <person name="Gusti V."/>
            <person name="Clausen I.G."/>
            <person name="Olsen P.B."/>
            <person name="Rasmussen M.D."/>
            <person name="Andersen J.T."/>
            <person name="Joergensen P.L."/>
            <person name="Larsen T.S."/>
            <person name="Sorokin A."/>
            <person name="Bolotin A."/>
            <person name="Lapidus A."/>
            <person name="Galleron N."/>
            <person name="Ehrlich S.D."/>
            <person name="Berka R.M."/>
        </authorList>
    </citation>
    <scope>NUCLEOTIDE SEQUENCE [LARGE SCALE GENOMIC DNA]</scope>
    <source>
        <strain>ATCC 14580 / DSM 13 / JCM 2505 / CCUG 7422 / NBRC 12200 / NCIMB 9375 / NCTC 10341 / NRRL NRS-1264 / Gibson 46</strain>
    </source>
</reference>
<protein>
    <recommendedName>
        <fullName evidence="1">Triosephosphate isomerase</fullName>
        <shortName evidence="1">TIM</shortName>
        <shortName evidence="1">TPI</shortName>
        <ecNumber evidence="1">5.3.1.1</ecNumber>
    </recommendedName>
    <alternativeName>
        <fullName evidence="1">Triose-phosphate isomerase</fullName>
    </alternativeName>
</protein>
<sequence>MRKPIIAGNWKMNKVLSEAVSFVEEVKSSIPAADKAEAVVCAPALFLEKLTSAVKGTDLKVGAQNMHFEESGAFTGEISPAALKDLGVEYCVIGHSERREMFAETDETVNKKAHAAFKYGIVPIICVGETLEEREANKTNELVADQVKKALAGLTTEQVAASVIAYEPIWAIGTGKSSTAQDANEVCAHIRKTVASEFGQTAADSVRIQYGGSVKPANIKEYMAESDIDGALVGGASLEPQSFVQLLEAGQYE</sequence>
<organism>
    <name type="scientific">Bacillus licheniformis (strain ATCC 14580 / DSM 13 / JCM 2505 / CCUG 7422 / NBRC 12200 / NCIMB 9375 / NCTC 10341 / NRRL NRS-1264 / Gibson 46)</name>
    <dbReference type="NCBI Taxonomy" id="279010"/>
    <lineage>
        <taxon>Bacteria</taxon>
        <taxon>Bacillati</taxon>
        <taxon>Bacillota</taxon>
        <taxon>Bacilli</taxon>
        <taxon>Bacillales</taxon>
        <taxon>Bacillaceae</taxon>
        <taxon>Bacillus</taxon>
    </lineage>
</organism>
<keyword id="KW-0963">Cytoplasm</keyword>
<keyword id="KW-0312">Gluconeogenesis</keyword>
<keyword id="KW-0324">Glycolysis</keyword>
<keyword id="KW-0413">Isomerase</keyword>
<keyword id="KW-0597">Phosphoprotein</keyword>
<keyword id="KW-1185">Reference proteome</keyword>
<comment type="function">
    <text evidence="1">Involved in the gluconeogenesis. Catalyzes stereospecifically the conversion of dihydroxyacetone phosphate (DHAP) to D-glyceraldehyde-3-phosphate (G3P).</text>
</comment>
<comment type="catalytic activity">
    <reaction evidence="1">
        <text>D-glyceraldehyde 3-phosphate = dihydroxyacetone phosphate</text>
        <dbReference type="Rhea" id="RHEA:18585"/>
        <dbReference type="ChEBI" id="CHEBI:57642"/>
        <dbReference type="ChEBI" id="CHEBI:59776"/>
        <dbReference type="EC" id="5.3.1.1"/>
    </reaction>
</comment>
<comment type="pathway">
    <text evidence="1">Carbohydrate biosynthesis; gluconeogenesis.</text>
</comment>
<comment type="pathway">
    <text evidence="1">Carbohydrate degradation; glycolysis; D-glyceraldehyde 3-phosphate from glycerone phosphate: step 1/1.</text>
</comment>
<comment type="subunit">
    <text evidence="1">Homodimer.</text>
</comment>
<comment type="subcellular location">
    <subcellularLocation>
        <location evidence="1">Cytoplasm</location>
    </subcellularLocation>
</comment>
<comment type="similarity">
    <text evidence="1">Belongs to the triosephosphate isomerase family.</text>
</comment>
<evidence type="ECO:0000255" key="1">
    <source>
        <dbReference type="HAMAP-Rule" id="MF_00147"/>
    </source>
</evidence>
<name>TPIS_BACLD</name>
<feature type="chain" id="PRO_0000307428" description="Triosephosphate isomerase">
    <location>
        <begin position="1"/>
        <end position="253"/>
    </location>
</feature>
<feature type="active site" description="Electrophile" evidence="1">
    <location>
        <position position="95"/>
    </location>
</feature>
<feature type="active site" description="Proton acceptor" evidence="1">
    <location>
        <position position="167"/>
    </location>
</feature>
<feature type="binding site" evidence="1">
    <location>
        <begin position="9"/>
        <end position="11"/>
    </location>
    <ligand>
        <name>substrate</name>
    </ligand>
</feature>
<feature type="binding site" evidence="1">
    <location>
        <position position="173"/>
    </location>
    <ligand>
        <name>substrate</name>
    </ligand>
</feature>
<feature type="binding site" evidence="1">
    <location>
        <position position="213"/>
    </location>
    <ligand>
        <name>substrate</name>
    </ligand>
</feature>
<feature type="binding site" evidence="1">
    <location>
        <begin position="234"/>
        <end position="235"/>
    </location>
    <ligand>
        <name>substrate</name>
    </ligand>
</feature>
<feature type="modified residue" description="Phosphoserine" evidence="1">
    <location>
        <position position="213"/>
    </location>
</feature>
<accession>Q65EN0</accession>
<accession>Q62Q47</accession>
<proteinExistence type="inferred from homology"/>
<dbReference type="EC" id="5.3.1.1" evidence="1"/>
<dbReference type="EMBL" id="CP000002">
    <property type="protein sequence ID" value="AAU25113.1"/>
    <property type="molecule type" value="Genomic_DNA"/>
</dbReference>
<dbReference type="EMBL" id="AE017333">
    <property type="protein sequence ID" value="AAU42484.1"/>
    <property type="molecule type" value="Genomic_DNA"/>
</dbReference>
<dbReference type="RefSeq" id="WP_003185464.1">
    <property type="nucleotide sequence ID" value="NC_006322.1"/>
</dbReference>
<dbReference type="SMR" id="Q65EN0"/>
<dbReference type="STRING" id="279010.BL03466"/>
<dbReference type="GeneID" id="92859757"/>
<dbReference type="KEGG" id="bld:BLi03663"/>
<dbReference type="KEGG" id="bli:BL03466"/>
<dbReference type="eggNOG" id="COG0149">
    <property type="taxonomic scope" value="Bacteria"/>
</dbReference>
<dbReference type="HOGENOM" id="CLU_024251_2_3_9"/>
<dbReference type="UniPathway" id="UPA00109">
    <property type="reaction ID" value="UER00189"/>
</dbReference>
<dbReference type="UniPathway" id="UPA00138"/>
<dbReference type="Proteomes" id="UP000000606">
    <property type="component" value="Chromosome"/>
</dbReference>
<dbReference type="GO" id="GO:0005829">
    <property type="term" value="C:cytosol"/>
    <property type="evidence" value="ECO:0007669"/>
    <property type="project" value="TreeGrafter"/>
</dbReference>
<dbReference type="GO" id="GO:0004807">
    <property type="term" value="F:triose-phosphate isomerase activity"/>
    <property type="evidence" value="ECO:0007669"/>
    <property type="project" value="UniProtKB-UniRule"/>
</dbReference>
<dbReference type="GO" id="GO:0006094">
    <property type="term" value="P:gluconeogenesis"/>
    <property type="evidence" value="ECO:0007669"/>
    <property type="project" value="UniProtKB-UniRule"/>
</dbReference>
<dbReference type="GO" id="GO:0046166">
    <property type="term" value="P:glyceraldehyde-3-phosphate biosynthetic process"/>
    <property type="evidence" value="ECO:0007669"/>
    <property type="project" value="TreeGrafter"/>
</dbReference>
<dbReference type="GO" id="GO:0019563">
    <property type="term" value="P:glycerol catabolic process"/>
    <property type="evidence" value="ECO:0007669"/>
    <property type="project" value="TreeGrafter"/>
</dbReference>
<dbReference type="GO" id="GO:0006096">
    <property type="term" value="P:glycolytic process"/>
    <property type="evidence" value="ECO:0007669"/>
    <property type="project" value="UniProtKB-UniRule"/>
</dbReference>
<dbReference type="CDD" id="cd00311">
    <property type="entry name" value="TIM"/>
    <property type="match status" value="1"/>
</dbReference>
<dbReference type="FunFam" id="3.20.20.70:FF:000016">
    <property type="entry name" value="Triosephosphate isomerase"/>
    <property type="match status" value="1"/>
</dbReference>
<dbReference type="Gene3D" id="3.20.20.70">
    <property type="entry name" value="Aldolase class I"/>
    <property type="match status" value="1"/>
</dbReference>
<dbReference type="HAMAP" id="MF_00147_B">
    <property type="entry name" value="TIM_B"/>
    <property type="match status" value="1"/>
</dbReference>
<dbReference type="InterPro" id="IPR013785">
    <property type="entry name" value="Aldolase_TIM"/>
</dbReference>
<dbReference type="InterPro" id="IPR035990">
    <property type="entry name" value="TIM_sf"/>
</dbReference>
<dbReference type="InterPro" id="IPR022896">
    <property type="entry name" value="TrioseP_Isoase_bac/euk"/>
</dbReference>
<dbReference type="InterPro" id="IPR000652">
    <property type="entry name" value="Triosephosphate_isomerase"/>
</dbReference>
<dbReference type="InterPro" id="IPR020861">
    <property type="entry name" value="Triosephosphate_isomerase_AS"/>
</dbReference>
<dbReference type="NCBIfam" id="TIGR00419">
    <property type="entry name" value="tim"/>
    <property type="match status" value="1"/>
</dbReference>
<dbReference type="PANTHER" id="PTHR21139">
    <property type="entry name" value="TRIOSEPHOSPHATE ISOMERASE"/>
    <property type="match status" value="1"/>
</dbReference>
<dbReference type="PANTHER" id="PTHR21139:SF42">
    <property type="entry name" value="TRIOSEPHOSPHATE ISOMERASE"/>
    <property type="match status" value="1"/>
</dbReference>
<dbReference type="Pfam" id="PF00121">
    <property type="entry name" value="TIM"/>
    <property type="match status" value="1"/>
</dbReference>
<dbReference type="SUPFAM" id="SSF51351">
    <property type="entry name" value="Triosephosphate isomerase (TIM)"/>
    <property type="match status" value="1"/>
</dbReference>
<dbReference type="PROSITE" id="PS00171">
    <property type="entry name" value="TIM_1"/>
    <property type="match status" value="1"/>
</dbReference>
<dbReference type="PROSITE" id="PS51440">
    <property type="entry name" value="TIM_2"/>
    <property type="match status" value="1"/>
</dbReference>
<gene>
    <name evidence="1" type="primary">tpiA</name>
    <name type="ordered locus">BLi03663</name>
    <name type="ordered locus">BL03466</name>
</gene>